<protein>
    <recommendedName>
        <fullName evidence="1">Ribonuclease Z</fullName>
        <shortName evidence="1">RNase Z</shortName>
        <ecNumber evidence="1">3.1.26.11</ecNumber>
    </recommendedName>
    <alternativeName>
        <fullName evidence="1">tRNA 3 endonuclease</fullName>
    </alternativeName>
    <alternativeName>
        <fullName evidence="1">tRNase Z</fullName>
    </alternativeName>
</protein>
<name>RNZ_GLOC7</name>
<evidence type="ECO:0000255" key="1">
    <source>
        <dbReference type="HAMAP-Rule" id="MF_01818"/>
    </source>
</evidence>
<dbReference type="EC" id="3.1.26.11" evidence="1"/>
<dbReference type="EMBL" id="CP001291">
    <property type="protein sequence ID" value="ACK69630.1"/>
    <property type="molecule type" value="Genomic_DNA"/>
</dbReference>
<dbReference type="RefSeq" id="WP_012598576.1">
    <property type="nucleotide sequence ID" value="NC_011729.1"/>
</dbReference>
<dbReference type="SMR" id="B7K762"/>
<dbReference type="STRING" id="65393.PCC7424_1179"/>
<dbReference type="KEGG" id="cyc:PCC7424_1179"/>
<dbReference type="eggNOG" id="COG1234">
    <property type="taxonomic scope" value="Bacteria"/>
</dbReference>
<dbReference type="HOGENOM" id="CLU_031317_2_0_3"/>
<dbReference type="OrthoDB" id="9800940at2"/>
<dbReference type="Proteomes" id="UP000002384">
    <property type="component" value="Chromosome"/>
</dbReference>
<dbReference type="GO" id="GO:0042781">
    <property type="term" value="F:3'-tRNA processing endoribonuclease activity"/>
    <property type="evidence" value="ECO:0007669"/>
    <property type="project" value="UniProtKB-UniRule"/>
</dbReference>
<dbReference type="GO" id="GO:0008270">
    <property type="term" value="F:zinc ion binding"/>
    <property type="evidence" value="ECO:0007669"/>
    <property type="project" value="UniProtKB-UniRule"/>
</dbReference>
<dbReference type="CDD" id="cd07717">
    <property type="entry name" value="RNaseZ_ZiPD-like_MBL-fold"/>
    <property type="match status" value="1"/>
</dbReference>
<dbReference type="FunFam" id="3.60.15.10:FF:000002">
    <property type="entry name" value="Ribonuclease Z"/>
    <property type="match status" value="1"/>
</dbReference>
<dbReference type="Gene3D" id="3.60.15.10">
    <property type="entry name" value="Ribonuclease Z/Hydroxyacylglutathione hydrolase-like"/>
    <property type="match status" value="1"/>
</dbReference>
<dbReference type="HAMAP" id="MF_01818">
    <property type="entry name" value="RNase_Z_BN"/>
    <property type="match status" value="1"/>
</dbReference>
<dbReference type="InterPro" id="IPR001279">
    <property type="entry name" value="Metallo-B-lactamas"/>
</dbReference>
<dbReference type="InterPro" id="IPR036866">
    <property type="entry name" value="RibonucZ/Hydroxyglut_hydro"/>
</dbReference>
<dbReference type="InterPro" id="IPR013471">
    <property type="entry name" value="RNase_Z/BN"/>
</dbReference>
<dbReference type="NCBIfam" id="NF000801">
    <property type="entry name" value="PRK00055.1-3"/>
    <property type="match status" value="1"/>
</dbReference>
<dbReference type="NCBIfam" id="TIGR02651">
    <property type="entry name" value="RNase_Z"/>
    <property type="match status" value="1"/>
</dbReference>
<dbReference type="PANTHER" id="PTHR46018">
    <property type="entry name" value="ZINC PHOSPHODIESTERASE ELAC PROTEIN 1"/>
    <property type="match status" value="1"/>
</dbReference>
<dbReference type="PANTHER" id="PTHR46018:SF2">
    <property type="entry name" value="ZINC PHOSPHODIESTERASE ELAC PROTEIN 1"/>
    <property type="match status" value="1"/>
</dbReference>
<dbReference type="Pfam" id="PF00753">
    <property type="entry name" value="Lactamase_B"/>
    <property type="match status" value="1"/>
</dbReference>
<dbReference type="Pfam" id="PF12706">
    <property type="entry name" value="Lactamase_B_2"/>
    <property type="match status" value="1"/>
</dbReference>
<dbReference type="SMART" id="SM00849">
    <property type="entry name" value="Lactamase_B"/>
    <property type="match status" value="1"/>
</dbReference>
<dbReference type="SUPFAM" id="SSF56281">
    <property type="entry name" value="Metallo-hydrolase/oxidoreductase"/>
    <property type="match status" value="1"/>
</dbReference>
<keyword id="KW-0255">Endonuclease</keyword>
<keyword id="KW-0378">Hydrolase</keyword>
<keyword id="KW-0479">Metal-binding</keyword>
<keyword id="KW-0540">Nuclease</keyword>
<keyword id="KW-1185">Reference proteome</keyword>
<keyword id="KW-0819">tRNA processing</keyword>
<keyword id="KW-0862">Zinc</keyword>
<sequence length="318" mass="35289">MEITFLGTSSGVPTRARNVSSVALRLPQRAEVWLFDCGEGTQHQLLRSDIKTSQLRRIFITHLHGDHIFGLMGLLASCGLAGNAQPVDLYGPPGLKDYIQACSKYSHTHFGNRVQVYTVEPGLVYEDEEFTVTCDLLKHRIPAFGYRIAEKDRTGRFDVEKAKSLGIPPGRIYGQLKKGETVTLTDGRVIRGQDLCGPTEAGRKFAYCTDTVFCETAIELAQGVDVLIHEATFAHQDAELAFDRLHSTSTMAAQVALAAGVNLLIMTHFSPRYAPGNPLDVTNLLQEARAIFPHTKLAYDFFNYEIPRHRSDHLVEVS</sequence>
<proteinExistence type="inferred from homology"/>
<comment type="function">
    <text evidence="1">Zinc phosphodiesterase, which displays some tRNA 3'-processing endonuclease activity. Probably involved in tRNA maturation, by removing a 3'-trailer from precursor tRNA.</text>
</comment>
<comment type="catalytic activity">
    <reaction evidence="1">
        <text>Endonucleolytic cleavage of RNA, removing extra 3' nucleotides from tRNA precursor, generating 3' termini of tRNAs. A 3'-hydroxy group is left at the tRNA terminus and a 5'-phosphoryl group is left at the trailer molecule.</text>
        <dbReference type="EC" id="3.1.26.11"/>
    </reaction>
</comment>
<comment type="cofactor">
    <cofactor evidence="1">
        <name>Zn(2+)</name>
        <dbReference type="ChEBI" id="CHEBI:29105"/>
    </cofactor>
    <text evidence="1">Binds 2 Zn(2+) ions.</text>
</comment>
<comment type="subunit">
    <text evidence="1">Homodimer.</text>
</comment>
<comment type="similarity">
    <text evidence="1">Belongs to the RNase Z family.</text>
</comment>
<feature type="chain" id="PRO_1000187950" description="Ribonuclease Z">
    <location>
        <begin position="1"/>
        <end position="318"/>
    </location>
</feature>
<feature type="active site" description="Proton acceptor" evidence="1">
    <location>
        <position position="66"/>
    </location>
</feature>
<feature type="binding site" evidence="1">
    <location>
        <position position="62"/>
    </location>
    <ligand>
        <name>Zn(2+)</name>
        <dbReference type="ChEBI" id="CHEBI:29105"/>
        <label>1</label>
        <note>catalytic</note>
    </ligand>
</feature>
<feature type="binding site" evidence="1">
    <location>
        <position position="64"/>
    </location>
    <ligand>
        <name>Zn(2+)</name>
        <dbReference type="ChEBI" id="CHEBI:29105"/>
        <label>1</label>
        <note>catalytic</note>
    </ligand>
</feature>
<feature type="binding site" evidence="1">
    <location>
        <position position="66"/>
    </location>
    <ligand>
        <name>Zn(2+)</name>
        <dbReference type="ChEBI" id="CHEBI:29105"/>
        <label>2</label>
        <note>catalytic</note>
    </ligand>
</feature>
<feature type="binding site" evidence="1">
    <location>
        <position position="67"/>
    </location>
    <ligand>
        <name>Zn(2+)</name>
        <dbReference type="ChEBI" id="CHEBI:29105"/>
        <label>2</label>
        <note>catalytic</note>
    </ligand>
</feature>
<feature type="binding site" evidence="1">
    <location>
        <position position="139"/>
    </location>
    <ligand>
        <name>Zn(2+)</name>
        <dbReference type="ChEBI" id="CHEBI:29105"/>
        <label>1</label>
        <note>catalytic</note>
    </ligand>
</feature>
<feature type="binding site" evidence="1">
    <location>
        <position position="210"/>
    </location>
    <ligand>
        <name>Zn(2+)</name>
        <dbReference type="ChEBI" id="CHEBI:29105"/>
        <label>1</label>
        <note>catalytic</note>
    </ligand>
</feature>
<feature type="binding site" evidence="1">
    <location>
        <position position="210"/>
    </location>
    <ligand>
        <name>Zn(2+)</name>
        <dbReference type="ChEBI" id="CHEBI:29105"/>
        <label>2</label>
        <note>catalytic</note>
    </ligand>
</feature>
<feature type="binding site" evidence="1">
    <location>
        <position position="268"/>
    </location>
    <ligand>
        <name>Zn(2+)</name>
        <dbReference type="ChEBI" id="CHEBI:29105"/>
        <label>2</label>
        <note>catalytic</note>
    </ligand>
</feature>
<organism>
    <name type="scientific">Gloeothece citriformis (strain PCC 7424)</name>
    <name type="common">Cyanothece sp. (strain PCC 7424)</name>
    <dbReference type="NCBI Taxonomy" id="65393"/>
    <lineage>
        <taxon>Bacteria</taxon>
        <taxon>Bacillati</taxon>
        <taxon>Cyanobacteriota</taxon>
        <taxon>Cyanophyceae</taxon>
        <taxon>Oscillatoriophycideae</taxon>
        <taxon>Chroococcales</taxon>
        <taxon>Aphanothecaceae</taxon>
        <taxon>Gloeothece</taxon>
        <taxon>Gloeothece citriformis</taxon>
    </lineage>
</organism>
<accession>B7K762</accession>
<gene>
    <name evidence="1" type="primary">rnz</name>
    <name type="ordered locus">PCC7424_1179</name>
</gene>
<reference key="1">
    <citation type="journal article" date="2011" name="MBio">
        <title>Novel metabolic attributes of the genus Cyanothece, comprising a group of unicellular nitrogen-fixing Cyanobacteria.</title>
        <authorList>
            <person name="Bandyopadhyay A."/>
            <person name="Elvitigala T."/>
            <person name="Welsh E."/>
            <person name="Stockel J."/>
            <person name="Liberton M."/>
            <person name="Min H."/>
            <person name="Sherman L.A."/>
            <person name="Pakrasi H.B."/>
        </authorList>
    </citation>
    <scope>NUCLEOTIDE SEQUENCE [LARGE SCALE GENOMIC DNA]</scope>
    <source>
        <strain>PCC 7424</strain>
    </source>
</reference>